<reference key="1">
    <citation type="journal article" date="1998" name="Nature">
        <title>Deciphering the biology of Mycobacterium tuberculosis from the complete genome sequence.</title>
        <authorList>
            <person name="Cole S.T."/>
            <person name="Brosch R."/>
            <person name="Parkhill J."/>
            <person name="Garnier T."/>
            <person name="Churcher C.M."/>
            <person name="Harris D.E."/>
            <person name="Gordon S.V."/>
            <person name="Eiglmeier K."/>
            <person name="Gas S."/>
            <person name="Barry C.E. III"/>
            <person name="Tekaia F."/>
            <person name="Badcock K."/>
            <person name="Basham D."/>
            <person name="Brown D."/>
            <person name="Chillingworth T."/>
            <person name="Connor R."/>
            <person name="Davies R.M."/>
            <person name="Devlin K."/>
            <person name="Feltwell T."/>
            <person name="Gentles S."/>
            <person name="Hamlin N."/>
            <person name="Holroyd S."/>
            <person name="Hornsby T."/>
            <person name="Jagels K."/>
            <person name="Krogh A."/>
            <person name="McLean J."/>
            <person name="Moule S."/>
            <person name="Murphy L.D."/>
            <person name="Oliver S."/>
            <person name="Osborne J."/>
            <person name="Quail M.A."/>
            <person name="Rajandream M.A."/>
            <person name="Rogers J."/>
            <person name="Rutter S."/>
            <person name="Seeger K."/>
            <person name="Skelton S."/>
            <person name="Squares S."/>
            <person name="Squares R."/>
            <person name="Sulston J.E."/>
            <person name="Taylor K."/>
            <person name="Whitehead S."/>
            <person name="Barrell B.G."/>
        </authorList>
    </citation>
    <scope>NUCLEOTIDE SEQUENCE [LARGE SCALE GENOMIC DNA]</scope>
    <source>
        <strain>ATCC 25618 / H37Rv</strain>
    </source>
</reference>
<reference key="2">
    <citation type="journal article" date="2011" name="Mol. Cell. Proteomics">
        <title>Proteogenomic analysis of Mycobacterium tuberculosis by high resolution mass spectrometry.</title>
        <authorList>
            <person name="Kelkar D.S."/>
            <person name="Kumar D."/>
            <person name="Kumar P."/>
            <person name="Balakrishnan L."/>
            <person name="Muthusamy B."/>
            <person name="Yadav A.K."/>
            <person name="Shrivastava P."/>
            <person name="Marimuthu A."/>
            <person name="Anand S."/>
            <person name="Sundaram H."/>
            <person name="Kingsbury R."/>
            <person name="Harsha H.C."/>
            <person name="Nair B."/>
            <person name="Prasad T.S."/>
            <person name="Chauhan D.S."/>
            <person name="Katoch K."/>
            <person name="Katoch V.M."/>
            <person name="Kumar P."/>
            <person name="Chaerkady R."/>
            <person name="Ramachandran S."/>
            <person name="Dash D."/>
            <person name="Pandey A."/>
        </authorList>
    </citation>
    <scope>IDENTIFICATION BY MASS SPECTROMETRY [LARGE SCALE ANALYSIS]</scope>
    <source>
        <strain>ATCC 25618 / H37Rv</strain>
    </source>
</reference>
<comment type="function">
    <text evidence="1">The glycine cleavage system catalyzes the degradation of glycine. The P protein binds the alpha-amino group of glycine through its pyridoxal phosphate cofactor; CO(2) is released and the remaining methylamine moiety is then transferred to the lipoamide cofactor of the H protein (By similarity).</text>
</comment>
<comment type="catalytic activity">
    <reaction>
        <text>N(6)-[(R)-lipoyl]-L-lysyl-[glycine-cleavage complex H protein] + glycine + H(+) = N(6)-[(R)-S(8)-aminomethyldihydrolipoyl]-L-lysyl-[glycine-cleavage complex H protein] + CO2</text>
        <dbReference type="Rhea" id="RHEA:24304"/>
        <dbReference type="Rhea" id="RHEA-COMP:10494"/>
        <dbReference type="Rhea" id="RHEA-COMP:10495"/>
        <dbReference type="ChEBI" id="CHEBI:15378"/>
        <dbReference type="ChEBI" id="CHEBI:16526"/>
        <dbReference type="ChEBI" id="CHEBI:57305"/>
        <dbReference type="ChEBI" id="CHEBI:83099"/>
        <dbReference type="ChEBI" id="CHEBI:83143"/>
        <dbReference type="EC" id="1.4.4.2"/>
    </reaction>
</comment>
<comment type="cofactor">
    <cofactor evidence="1">
        <name>pyridoxal 5'-phosphate</name>
        <dbReference type="ChEBI" id="CHEBI:597326"/>
    </cofactor>
</comment>
<comment type="subunit">
    <text evidence="1">The glycine cleavage system is composed of four proteins: P, T, L and H.</text>
</comment>
<comment type="similarity">
    <text evidence="2">Belongs to the GcvP family.</text>
</comment>
<name>GCSP_MYCTU</name>
<proteinExistence type="evidence at protein level"/>
<protein>
    <recommendedName>
        <fullName>Probable glycine dehydrogenase (decarboxylating)</fullName>
        <ecNumber>1.4.4.2</ecNumber>
    </recommendedName>
    <alternativeName>
        <fullName>Glycine cleavage system P-protein</fullName>
    </alternativeName>
    <alternativeName>
        <fullName>Glycine decarboxylase</fullName>
    </alternativeName>
    <alternativeName>
        <fullName>Glycine dehydrogenase (aminomethyl-transferring)</fullName>
    </alternativeName>
</protein>
<organism>
    <name type="scientific">Mycobacterium tuberculosis (strain ATCC 25618 / H37Rv)</name>
    <dbReference type="NCBI Taxonomy" id="83332"/>
    <lineage>
        <taxon>Bacteria</taxon>
        <taxon>Bacillati</taxon>
        <taxon>Actinomycetota</taxon>
        <taxon>Actinomycetes</taxon>
        <taxon>Mycobacteriales</taxon>
        <taxon>Mycobacteriaceae</taxon>
        <taxon>Mycobacterium</taxon>
        <taxon>Mycobacterium tuberculosis complex</taxon>
    </lineage>
</organism>
<dbReference type="EC" id="1.4.4.2"/>
<dbReference type="EMBL" id="AL123456">
    <property type="protein sequence ID" value="CCP44598.1"/>
    <property type="molecule type" value="Genomic_DNA"/>
</dbReference>
<dbReference type="PIR" id="A70722">
    <property type="entry name" value="A70722"/>
</dbReference>
<dbReference type="RefSeq" id="NP_216348.1">
    <property type="nucleotide sequence ID" value="NC_000962.3"/>
</dbReference>
<dbReference type="RefSeq" id="WP_003900418.1">
    <property type="nucleotide sequence ID" value="NZ_NVQJ01000013.1"/>
</dbReference>
<dbReference type="SMR" id="P9WN53"/>
<dbReference type="FunCoup" id="P9WN53">
    <property type="interactions" value="327"/>
</dbReference>
<dbReference type="STRING" id="83332.Rv1832"/>
<dbReference type="PaxDb" id="83332-Rv1832"/>
<dbReference type="DNASU" id="885716"/>
<dbReference type="GeneID" id="885716"/>
<dbReference type="KEGG" id="mtu:Rv1832"/>
<dbReference type="KEGG" id="mtv:RVBD_1832"/>
<dbReference type="TubercuList" id="Rv1832"/>
<dbReference type="eggNOG" id="COG0403">
    <property type="taxonomic scope" value="Bacteria"/>
</dbReference>
<dbReference type="eggNOG" id="COG1003">
    <property type="taxonomic scope" value="Bacteria"/>
</dbReference>
<dbReference type="InParanoid" id="P9WN53"/>
<dbReference type="OrthoDB" id="9801272at2"/>
<dbReference type="PhylomeDB" id="P9WN53"/>
<dbReference type="Proteomes" id="UP000001584">
    <property type="component" value="Chromosome"/>
</dbReference>
<dbReference type="GO" id="GO:0005829">
    <property type="term" value="C:cytosol"/>
    <property type="evidence" value="ECO:0000318"/>
    <property type="project" value="GO_Central"/>
</dbReference>
<dbReference type="GO" id="GO:0005960">
    <property type="term" value="C:glycine cleavage complex"/>
    <property type="evidence" value="ECO:0000318"/>
    <property type="project" value="GO_Central"/>
</dbReference>
<dbReference type="GO" id="GO:0009274">
    <property type="term" value="C:peptidoglycan-based cell wall"/>
    <property type="evidence" value="ECO:0007005"/>
    <property type="project" value="MTBBASE"/>
</dbReference>
<dbReference type="GO" id="GO:0005886">
    <property type="term" value="C:plasma membrane"/>
    <property type="evidence" value="ECO:0007005"/>
    <property type="project" value="MTBBASE"/>
</dbReference>
<dbReference type="GO" id="GO:0016594">
    <property type="term" value="F:glycine binding"/>
    <property type="evidence" value="ECO:0000318"/>
    <property type="project" value="GO_Central"/>
</dbReference>
<dbReference type="GO" id="GO:0004375">
    <property type="term" value="F:glycine dehydrogenase (decarboxylating) activity"/>
    <property type="evidence" value="ECO:0000318"/>
    <property type="project" value="GO_Central"/>
</dbReference>
<dbReference type="GO" id="GO:0030170">
    <property type="term" value="F:pyridoxal phosphate binding"/>
    <property type="evidence" value="ECO:0000318"/>
    <property type="project" value="GO_Central"/>
</dbReference>
<dbReference type="GO" id="GO:0019464">
    <property type="term" value="P:glycine decarboxylation via glycine cleavage system"/>
    <property type="evidence" value="ECO:0000318"/>
    <property type="project" value="GO_Central"/>
</dbReference>
<dbReference type="CDD" id="cd00613">
    <property type="entry name" value="GDC-P"/>
    <property type="match status" value="2"/>
</dbReference>
<dbReference type="FunFam" id="3.90.1150.10:FF:000059">
    <property type="entry name" value="Glycine dehydrogenase (decarboxylating)"/>
    <property type="match status" value="1"/>
</dbReference>
<dbReference type="FunFam" id="3.40.640.10:FF:000005">
    <property type="entry name" value="Glycine dehydrogenase (decarboxylating), mitochondrial"/>
    <property type="match status" value="1"/>
</dbReference>
<dbReference type="FunFam" id="3.40.640.10:FF:000007">
    <property type="entry name" value="glycine dehydrogenase (Decarboxylating), mitochondrial"/>
    <property type="match status" value="1"/>
</dbReference>
<dbReference type="Gene3D" id="3.90.1150.10">
    <property type="entry name" value="Aspartate Aminotransferase, domain 1"/>
    <property type="match status" value="2"/>
</dbReference>
<dbReference type="Gene3D" id="3.40.640.10">
    <property type="entry name" value="Type I PLP-dependent aspartate aminotransferase-like (Major domain)"/>
    <property type="match status" value="2"/>
</dbReference>
<dbReference type="HAMAP" id="MF_00711">
    <property type="entry name" value="GcvP"/>
    <property type="match status" value="1"/>
</dbReference>
<dbReference type="InterPro" id="IPR003437">
    <property type="entry name" value="GcvP"/>
</dbReference>
<dbReference type="InterPro" id="IPR049316">
    <property type="entry name" value="GDC-P_C"/>
</dbReference>
<dbReference type="InterPro" id="IPR049315">
    <property type="entry name" value="GDC-P_N"/>
</dbReference>
<dbReference type="InterPro" id="IPR020581">
    <property type="entry name" value="GDC_P"/>
</dbReference>
<dbReference type="InterPro" id="IPR015424">
    <property type="entry name" value="PyrdxlP-dep_Trfase"/>
</dbReference>
<dbReference type="InterPro" id="IPR015421">
    <property type="entry name" value="PyrdxlP-dep_Trfase_major"/>
</dbReference>
<dbReference type="InterPro" id="IPR015422">
    <property type="entry name" value="PyrdxlP-dep_Trfase_small"/>
</dbReference>
<dbReference type="NCBIfam" id="TIGR00461">
    <property type="entry name" value="gcvP"/>
    <property type="match status" value="1"/>
</dbReference>
<dbReference type="PANTHER" id="PTHR11773:SF1">
    <property type="entry name" value="GLYCINE DEHYDROGENASE (DECARBOXYLATING), MITOCHONDRIAL"/>
    <property type="match status" value="1"/>
</dbReference>
<dbReference type="PANTHER" id="PTHR11773">
    <property type="entry name" value="GLYCINE DEHYDROGENASE, DECARBOXYLATING"/>
    <property type="match status" value="1"/>
</dbReference>
<dbReference type="Pfam" id="PF21478">
    <property type="entry name" value="GcvP2_C"/>
    <property type="match status" value="1"/>
</dbReference>
<dbReference type="Pfam" id="PF02347">
    <property type="entry name" value="GDC-P"/>
    <property type="match status" value="2"/>
</dbReference>
<dbReference type="SUPFAM" id="SSF53383">
    <property type="entry name" value="PLP-dependent transferases"/>
    <property type="match status" value="2"/>
</dbReference>
<keyword id="KW-0560">Oxidoreductase</keyword>
<keyword id="KW-0663">Pyridoxal phosphate</keyword>
<keyword id="KW-1185">Reference proteome</keyword>
<gene>
    <name type="primary">gcvP</name>
    <name type="synonym">gcvB</name>
    <name type="ordered locus">Rv1832</name>
    <name type="ORF">MTCY1A11.11c</name>
</gene>
<accession>P9WN53</accession>
<accession>L0T810</accession>
<accession>Q50601</accession>
<feature type="chain" id="PRO_0000166920" description="Probable glycine dehydrogenase (decarboxylating)">
    <location>
        <begin position="1"/>
        <end position="941"/>
    </location>
</feature>
<feature type="modified residue" description="N6-(pyridoxal phosphate)lysine" evidence="1">
    <location>
        <position position="692"/>
    </location>
</feature>
<evidence type="ECO:0000250" key="1"/>
<evidence type="ECO:0000305" key="2"/>
<sequence length="941" mass="99511">MSDHSTFADRHIGLDSQAVATMLAVIGVDSLDDLAVKAVPAGILDTLTDTGAAPGLDSLPPAASEAEALAELRALADANTVAVSMIGQGYYDTHTPPVLLRNIIENPAWYTAYTPYQPEISQGRLEALLNFQTLVTDLTGLEIANASMLDEGTAAAEAMTLMHRAARGPVKRVVVDADVFTQTAAVLATRAKPLGIEIVTADLRAGLPDGEFFGVIAQLPGASGRITDWSALVQQAHDRGALVAVGADLLALTLIAPPGEIGADVAFGTTQRFGVPMGFGGPHAGYLAVHAKHARQLPGRLVGVSVDSDGTPAYRLALQTREQHIRRDKATSNICTAQVLLAVLAAMYASYHGAGGLTAIARRVHAHAEAIAGALGDALVHDKYFDTVLARVPGRADEVLARAKANGINLWRVDADHVSVACDEATTDTHVAVVLDAFGVAAAAPAHTDIATRTSEFLTHPAFTQYRTETSMMRYLRALADKDIALDRSMIPLGSCTMKLNAAAEMESITWPEFGRQHPFAPASDTAGLRQLVADLQSWLVLITGYDAVSLQPNAGSQGEYAGLLAIHEYHASRGEPHRDICLIPSSAHGTNAASAALAGMRVVVVDCHDNGDVDLDDLRAKVGEHAERLSALMITYPSTHGVYEHDIAEICAAVHDAGGQVYVDGANLNALVGLARPGKFGGDVSHLNLHKTFCIPHGGGGPGVGPVAVRAHLAPFLPGHPFAPELPKGYPVSSAPYGSASILPITWAYIRMMGAEGLRAASLTAITSANYIARRLDEYYPVLYTGENGMVAHECILDLRGITKLTGITVDDVAKRLADYGFHAPTMSFPVAGTLMVEPTESESLAEVDAFCEAMIGIRAEIDKVGAGEWPVDDNPLRGAPHTAQCLLASDWDHPYTREQAAYPLGTAFRPKVWPAVRRIDGAYGDRNLVCSCPPVEAFA</sequence>